<feature type="chain" id="PRO_0000312433" description="Transcription factor RAX3">
    <location>
        <begin position="1"/>
        <end position="310"/>
    </location>
</feature>
<feature type="domain" description="HTH myb-type 1" evidence="2">
    <location>
        <begin position="9"/>
        <end position="62"/>
    </location>
</feature>
<feature type="domain" description="HTH myb-type 2" evidence="2">
    <location>
        <begin position="63"/>
        <end position="117"/>
    </location>
</feature>
<feature type="DNA-binding region" description="H-T-H motif" evidence="2">
    <location>
        <begin position="38" status="uncertain"/>
        <end position="62"/>
    </location>
</feature>
<feature type="DNA-binding region" description="H-T-H motif" evidence="2">
    <location>
        <begin position="90" status="uncertain"/>
        <end position="113"/>
    </location>
</feature>
<feature type="sequence variant" description="In strain: cv. Se-0." evidence="4">
    <original>E</original>
    <variation>D</variation>
    <location>
        <position position="131"/>
    </location>
</feature>
<feature type="sequence variant" description="In strain: cv. Cvi-1." evidence="4">
    <original>L</original>
    <variation>I</variation>
    <location>
        <position position="229"/>
    </location>
</feature>
<feature type="sequence variant" description="In strain: cv. Ct-1, cv. Edi-0 and cv. Ga-0." evidence="4">
    <original>L</original>
    <variation>V</variation>
    <location>
        <position position="238"/>
    </location>
</feature>
<accession>Q9M2Y9</accession>
<accession>A5YZ78</accession>
<accession>A5YZ81</accession>
<accession>A5YZ92</accession>
<accession>A5YZ97</accession>
<reference key="1">
    <citation type="submission" date="2004-01" db="EMBL/GenBank/DDBJ databases">
        <title>The MYB transcription factor family in Arabidopsis: a genome-wide cloning and expression pattern analysis.</title>
        <authorList>
            <person name="Qu L.-J."/>
            <person name="Gu H."/>
        </authorList>
    </citation>
    <scope>NUCLEOTIDE SEQUENCE [MRNA]</scope>
</reference>
<reference key="2">
    <citation type="journal article" date="2000" name="Nature">
        <title>Sequence and analysis of chromosome 3 of the plant Arabidopsis thaliana.</title>
        <authorList>
            <person name="Salanoubat M."/>
            <person name="Lemcke K."/>
            <person name="Rieger M."/>
            <person name="Ansorge W."/>
            <person name="Unseld M."/>
            <person name="Fartmann B."/>
            <person name="Valle G."/>
            <person name="Bloecker H."/>
            <person name="Perez-Alonso M."/>
            <person name="Obermaier B."/>
            <person name="Delseny M."/>
            <person name="Boutry M."/>
            <person name="Grivell L.A."/>
            <person name="Mache R."/>
            <person name="Puigdomenech P."/>
            <person name="De Simone V."/>
            <person name="Choisne N."/>
            <person name="Artiguenave F."/>
            <person name="Robert C."/>
            <person name="Brottier P."/>
            <person name="Wincker P."/>
            <person name="Cattolico L."/>
            <person name="Weissenbach J."/>
            <person name="Saurin W."/>
            <person name="Quetier F."/>
            <person name="Schaefer M."/>
            <person name="Mueller-Auer S."/>
            <person name="Gabel C."/>
            <person name="Fuchs M."/>
            <person name="Benes V."/>
            <person name="Wurmbach E."/>
            <person name="Drzonek H."/>
            <person name="Erfle H."/>
            <person name="Jordan N."/>
            <person name="Bangert S."/>
            <person name="Wiedelmann R."/>
            <person name="Kranz H."/>
            <person name="Voss H."/>
            <person name="Holland R."/>
            <person name="Brandt P."/>
            <person name="Nyakatura G."/>
            <person name="Vezzi A."/>
            <person name="D'Angelo M."/>
            <person name="Pallavicini A."/>
            <person name="Toppo S."/>
            <person name="Simionati B."/>
            <person name="Conrad A."/>
            <person name="Hornischer K."/>
            <person name="Kauer G."/>
            <person name="Loehnert T.-H."/>
            <person name="Nordsiek G."/>
            <person name="Reichelt J."/>
            <person name="Scharfe M."/>
            <person name="Schoen O."/>
            <person name="Bargues M."/>
            <person name="Terol J."/>
            <person name="Climent J."/>
            <person name="Navarro P."/>
            <person name="Collado C."/>
            <person name="Perez-Perez A."/>
            <person name="Ottenwaelder B."/>
            <person name="Duchemin D."/>
            <person name="Cooke R."/>
            <person name="Laudie M."/>
            <person name="Berger-Llauro C."/>
            <person name="Purnelle B."/>
            <person name="Masuy D."/>
            <person name="de Haan M."/>
            <person name="Maarse A.C."/>
            <person name="Alcaraz J.-P."/>
            <person name="Cottet A."/>
            <person name="Casacuberta E."/>
            <person name="Monfort A."/>
            <person name="Argiriou A."/>
            <person name="Flores M."/>
            <person name="Liguori R."/>
            <person name="Vitale D."/>
            <person name="Mannhaupt G."/>
            <person name="Haase D."/>
            <person name="Schoof H."/>
            <person name="Rudd S."/>
            <person name="Zaccaria P."/>
            <person name="Mewes H.-W."/>
            <person name="Mayer K.F.X."/>
            <person name="Kaul S."/>
            <person name="Town C.D."/>
            <person name="Koo H.L."/>
            <person name="Tallon L.J."/>
            <person name="Jenkins J."/>
            <person name="Rooney T."/>
            <person name="Rizzo M."/>
            <person name="Walts A."/>
            <person name="Utterback T."/>
            <person name="Fujii C.Y."/>
            <person name="Shea T.P."/>
            <person name="Creasy T.H."/>
            <person name="Haas B."/>
            <person name="Maiti R."/>
            <person name="Wu D."/>
            <person name="Peterson J."/>
            <person name="Van Aken S."/>
            <person name="Pai G."/>
            <person name="Militscher J."/>
            <person name="Sellers P."/>
            <person name="Gill J.E."/>
            <person name="Feldblyum T.V."/>
            <person name="Preuss D."/>
            <person name="Lin X."/>
            <person name="Nierman W.C."/>
            <person name="Salzberg S.L."/>
            <person name="White O."/>
            <person name="Venter J.C."/>
            <person name="Fraser C.M."/>
            <person name="Kaneko T."/>
            <person name="Nakamura Y."/>
            <person name="Sato S."/>
            <person name="Kato T."/>
            <person name="Asamizu E."/>
            <person name="Sasamoto S."/>
            <person name="Kimura T."/>
            <person name="Idesawa K."/>
            <person name="Kawashima K."/>
            <person name="Kishida Y."/>
            <person name="Kiyokawa C."/>
            <person name="Kohara M."/>
            <person name="Matsumoto M."/>
            <person name="Matsuno A."/>
            <person name="Muraki A."/>
            <person name="Nakayama S."/>
            <person name="Nakazaki N."/>
            <person name="Shinpo S."/>
            <person name="Takeuchi C."/>
            <person name="Wada T."/>
            <person name="Watanabe A."/>
            <person name="Yamada M."/>
            <person name="Yasuda M."/>
            <person name="Tabata S."/>
        </authorList>
    </citation>
    <scope>NUCLEOTIDE SEQUENCE [LARGE SCALE GENOMIC DNA]</scope>
    <source>
        <strain>cv. Columbia</strain>
    </source>
</reference>
<reference key="3">
    <citation type="journal article" date="2017" name="Plant J.">
        <title>Araport11: a complete reannotation of the Arabidopsis thaliana reference genome.</title>
        <authorList>
            <person name="Cheng C.Y."/>
            <person name="Krishnakumar V."/>
            <person name="Chan A.P."/>
            <person name="Thibaud-Nissen F."/>
            <person name="Schobel S."/>
            <person name="Town C.D."/>
        </authorList>
    </citation>
    <scope>GENOME REANNOTATION</scope>
    <source>
        <strain>cv. Columbia</strain>
    </source>
</reference>
<reference key="4">
    <citation type="submission" date="2006-10" db="EMBL/GenBank/DDBJ databases">
        <title>Arabidopsis ORF Clones.</title>
        <authorList>
            <person name="Quinitio C."/>
            <person name="Chen H."/>
            <person name="Kim C.J."/>
            <person name="Shinn P."/>
            <person name="Ecker J.R."/>
        </authorList>
    </citation>
    <scope>NUCLEOTIDE SEQUENCE [LARGE SCALE MRNA]</scope>
    <source>
        <strain>cv. Columbia</strain>
    </source>
</reference>
<reference key="5">
    <citation type="journal article" date="2007" name="Genetics">
        <title>The genetic architecture of shoot branching in Arabidopsis thaliana: a comparative assessment of candidate gene associations vs. quantitative trait locus mapping.</title>
        <authorList>
            <person name="Ehrenreich I.M."/>
            <person name="Stafford P.A."/>
            <person name="Purugganan M.D."/>
        </authorList>
    </citation>
    <scope>NUCLEOTIDE SEQUENCE [GENOMIC DNA] OF 99-283</scope>
    <scope>VARIANTS ASP-131; ILE-229 AND VAL-238</scope>
    <source>
        <strain>cv. Ag-0</strain>
        <strain>cv. An-1</strain>
        <strain>cv. Br-0</strain>
        <strain>cv. C24</strain>
        <strain>cv. Ct-1</strain>
        <strain>cv. Cvi-1</strain>
        <strain>cv. Edi-0</strain>
        <strain>cv. Ga-0</strain>
        <strain>cv. Kas-1</strain>
        <strain>cv. Kin-0</strain>
        <strain>cv. Landsberg erecta</strain>
        <strain>cv. Ll-0</strain>
        <strain>cv. Lz-0</strain>
        <strain>cv. Ms-0</strain>
        <strain>cv. Mt-0</strain>
        <strain>cv. Nd-1</strain>
        <strain>cv. Nok-3</strain>
        <strain>cv. Oy-0</strain>
        <strain>cv. Se-0</strain>
        <strain>cv. Sorbo</strain>
        <strain>cv. Tsu-1</strain>
        <strain>cv. Van-0</strain>
        <strain>cv. Wa-1</strain>
        <strain>cv. Wassilewskija</strain>
    </source>
</reference>
<reference key="6">
    <citation type="journal article" date="2001" name="Curr. Opin. Plant Biol.">
        <title>The R2R3-MYB gene family in Arabidopsis thaliana.</title>
        <authorList>
            <person name="Stracke R."/>
            <person name="Werber M."/>
            <person name="Weisshaar B."/>
        </authorList>
    </citation>
    <scope>GENE FAMILY</scope>
    <scope>NOMENCLATURE</scope>
    <source>
        <strain>cv. Columbia</strain>
    </source>
</reference>
<reference key="7">
    <citation type="journal article" date="2006" name="Plant Cell">
        <title>Blind homologous R2R3 Myb genes control the pattern of lateral meristem initiation in Arabidopsis.</title>
        <authorList>
            <person name="Mueller D."/>
            <person name="Schmitz G."/>
            <person name="Theres K."/>
        </authorList>
    </citation>
    <scope>FUNCTION</scope>
    <scope>DEVELOPMENTAL STAGE</scope>
    <scope>TISSUE SPECIFICITY</scope>
</reference>
<reference key="8">
    <citation type="journal article" date="2006" name="Plant Mol. Biol.">
        <title>The MYB transcription factor superfamily of Arabidopsis: expression analysis and phylogenetic comparison with the rice MYB family.</title>
        <authorList>
            <person name="Chen Y."/>
            <person name="Yang X."/>
            <person name="He K."/>
            <person name="Liu M."/>
            <person name="Li J."/>
            <person name="Gao Z."/>
            <person name="Lin Z."/>
            <person name="Zhang Y."/>
            <person name="Wang X."/>
            <person name="Qiu X."/>
            <person name="Shen Y."/>
            <person name="Zhang L."/>
            <person name="Deng X."/>
            <person name="Luo J."/>
            <person name="Deng X.-W."/>
            <person name="Chen Z."/>
            <person name="Gu H."/>
            <person name="Qu L.-J."/>
        </authorList>
    </citation>
    <scope>GENE FAMILY</scope>
</reference>
<gene>
    <name type="primary">RAX3</name>
    <name type="synonym">MYB84</name>
    <name type="ordered locus">At3g49690</name>
    <name type="ORF">T16K5.40</name>
</gene>
<protein>
    <recommendedName>
        <fullName>Transcription factor RAX3</fullName>
    </recommendedName>
    <alternativeName>
        <fullName>Myb-related protein 84</fullName>
        <shortName>AtMYB84</shortName>
    </alternativeName>
    <alternativeName>
        <fullName>Protein REGULATOR OF AXILLARY MERISTEMS 3</fullName>
    </alternativeName>
</protein>
<keyword id="KW-0010">Activator</keyword>
<keyword id="KW-0217">Developmental protein</keyword>
<keyword id="KW-0238">DNA-binding</keyword>
<keyword id="KW-0539">Nucleus</keyword>
<keyword id="KW-1185">Reference proteome</keyword>
<keyword id="KW-0677">Repeat</keyword>
<keyword id="KW-0804">Transcription</keyword>
<keyword id="KW-0805">Transcription regulation</keyword>
<sequence length="310" mass="35578">MGRAPCCDKANVKKGPWSPEEDAKLKSYIENSGTGGNWIALPQKIGLKRCGKSCRLRWLNYLRPNIKHGGFSEEEENIICSLYLTIGSRWSIIAAQLPGRTDNDIKNYWNTRLKKKLINKQRKELQEACMEQQEMMVMMKRQHQQQQIQTSFMMRQDQTMFTWPLHHHNVQVPALFMNQTNSFCDQEDVKPVLIKNMVKIEDQELEKTNPHHHQDSMTNAFDHLSFSQLLLDPNHNHLGSGEGFSMNSILSANTNSPLLNTSNDNQWFGNFQAETVNLFSGASTSTSADQSTISWEDISSLVYSDSKQFF</sequence>
<proteinExistence type="evidence at transcript level"/>
<organism>
    <name type="scientific">Arabidopsis thaliana</name>
    <name type="common">Mouse-ear cress</name>
    <dbReference type="NCBI Taxonomy" id="3702"/>
    <lineage>
        <taxon>Eukaryota</taxon>
        <taxon>Viridiplantae</taxon>
        <taxon>Streptophyta</taxon>
        <taxon>Embryophyta</taxon>
        <taxon>Tracheophyta</taxon>
        <taxon>Spermatophyta</taxon>
        <taxon>Magnoliopsida</taxon>
        <taxon>eudicotyledons</taxon>
        <taxon>Gunneridae</taxon>
        <taxon>Pentapetalae</taxon>
        <taxon>rosids</taxon>
        <taxon>malvids</taxon>
        <taxon>Brassicales</taxon>
        <taxon>Brassicaceae</taxon>
        <taxon>Camelineae</taxon>
        <taxon>Arabidopsis</taxon>
    </lineage>
</organism>
<dbReference type="EMBL" id="AY519597">
    <property type="protein sequence ID" value="AAS10067.1"/>
    <property type="molecule type" value="mRNA"/>
</dbReference>
<dbReference type="EMBL" id="AL132965">
    <property type="protein sequence ID" value="CAB66907.1"/>
    <property type="molecule type" value="Genomic_DNA"/>
</dbReference>
<dbReference type="EMBL" id="CP002686">
    <property type="protein sequence ID" value="AEE78577.1"/>
    <property type="molecule type" value="Genomic_DNA"/>
</dbReference>
<dbReference type="EMBL" id="BT029224">
    <property type="protein sequence ID" value="ABJ98556.1"/>
    <property type="molecule type" value="mRNA"/>
</dbReference>
<dbReference type="EMBL" id="EF598660">
    <property type="protein sequence ID" value="ABQ85360.1"/>
    <property type="molecule type" value="Genomic_DNA"/>
</dbReference>
<dbReference type="EMBL" id="EF598661">
    <property type="protein sequence ID" value="ABQ85361.1"/>
    <property type="molecule type" value="Genomic_DNA"/>
</dbReference>
<dbReference type="EMBL" id="EF598662">
    <property type="protein sequence ID" value="ABQ85362.1"/>
    <property type="molecule type" value="Genomic_DNA"/>
</dbReference>
<dbReference type="EMBL" id="EF598663">
    <property type="protein sequence ID" value="ABQ85363.1"/>
    <property type="molecule type" value="Genomic_DNA"/>
</dbReference>
<dbReference type="EMBL" id="EF598664">
    <property type="protein sequence ID" value="ABQ85364.1"/>
    <property type="molecule type" value="Genomic_DNA"/>
</dbReference>
<dbReference type="EMBL" id="EF598665">
    <property type="protein sequence ID" value="ABQ85365.1"/>
    <property type="molecule type" value="Genomic_DNA"/>
</dbReference>
<dbReference type="EMBL" id="EF598666">
    <property type="protein sequence ID" value="ABQ85366.1"/>
    <property type="molecule type" value="Genomic_DNA"/>
</dbReference>
<dbReference type="EMBL" id="EF598667">
    <property type="protein sequence ID" value="ABQ85367.1"/>
    <property type="molecule type" value="Genomic_DNA"/>
</dbReference>
<dbReference type="EMBL" id="EF598668">
    <property type="protein sequence ID" value="ABQ85368.1"/>
    <property type="molecule type" value="Genomic_DNA"/>
</dbReference>
<dbReference type="EMBL" id="EF598669">
    <property type="protein sequence ID" value="ABQ85369.1"/>
    <property type="molecule type" value="Genomic_DNA"/>
</dbReference>
<dbReference type="EMBL" id="EF598670">
    <property type="protein sequence ID" value="ABQ85370.1"/>
    <property type="molecule type" value="Genomic_DNA"/>
</dbReference>
<dbReference type="EMBL" id="EF598671">
    <property type="protein sequence ID" value="ABQ85371.1"/>
    <property type="molecule type" value="Genomic_DNA"/>
</dbReference>
<dbReference type="EMBL" id="EF598672">
    <property type="protein sequence ID" value="ABQ85372.1"/>
    <property type="molecule type" value="Genomic_DNA"/>
</dbReference>
<dbReference type="EMBL" id="EF598673">
    <property type="protein sequence ID" value="ABQ85373.1"/>
    <property type="molecule type" value="Genomic_DNA"/>
</dbReference>
<dbReference type="EMBL" id="EF598674">
    <property type="protein sequence ID" value="ABQ85374.1"/>
    <property type="molecule type" value="Genomic_DNA"/>
</dbReference>
<dbReference type="EMBL" id="EF598675">
    <property type="protein sequence ID" value="ABQ85375.1"/>
    <property type="molecule type" value="Genomic_DNA"/>
</dbReference>
<dbReference type="EMBL" id="EF598676">
    <property type="protein sequence ID" value="ABQ85376.1"/>
    <property type="molecule type" value="Genomic_DNA"/>
</dbReference>
<dbReference type="EMBL" id="EF598677">
    <property type="protein sequence ID" value="ABQ85377.1"/>
    <property type="molecule type" value="Genomic_DNA"/>
</dbReference>
<dbReference type="EMBL" id="EF598678">
    <property type="protein sequence ID" value="ABQ85378.1"/>
    <property type="molecule type" value="Genomic_DNA"/>
</dbReference>
<dbReference type="EMBL" id="EF598679">
    <property type="protein sequence ID" value="ABQ85379.1"/>
    <property type="molecule type" value="Genomic_DNA"/>
</dbReference>
<dbReference type="EMBL" id="EF598680">
    <property type="protein sequence ID" value="ABQ85380.1"/>
    <property type="molecule type" value="Genomic_DNA"/>
</dbReference>
<dbReference type="EMBL" id="EF598681">
    <property type="protein sequence ID" value="ABQ85381.1"/>
    <property type="molecule type" value="Genomic_DNA"/>
</dbReference>
<dbReference type="EMBL" id="EF598682">
    <property type="protein sequence ID" value="ABQ85382.1"/>
    <property type="molecule type" value="Genomic_DNA"/>
</dbReference>
<dbReference type="EMBL" id="EF598683">
    <property type="protein sequence ID" value="ABQ85383.1"/>
    <property type="molecule type" value="Genomic_DNA"/>
</dbReference>
<dbReference type="PIR" id="T46035">
    <property type="entry name" value="T46035"/>
</dbReference>
<dbReference type="RefSeq" id="NP_190538.1">
    <property type="nucleotide sequence ID" value="NM_114829.4"/>
</dbReference>
<dbReference type="SMR" id="Q9M2Y9"/>
<dbReference type="BioGRID" id="9449">
    <property type="interactions" value="7"/>
</dbReference>
<dbReference type="FunCoup" id="Q9M2Y9">
    <property type="interactions" value="41"/>
</dbReference>
<dbReference type="IntAct" id="Q9M2Y9">
    <property type="interactions" value="9"/>
</dbReference>
<dbReference type="STRING" id="3702.Q9M2Y9"/>
<dbReference type="PaxDb" id="3702-AT3G49690.1"/>
<dbReference type="EnsemblPlants" id="AT3G49690.1">
    <property type="protein sequence ID" value="AT3G49690.1"/>
    <property type="gene ID" value="AT3G49690"/>
</dbReference>
<dbReference type="GeneID" id="824131"/>
<dbReference type="Gramene" id="AT3G49690.1">
    <property type="protein sequence ID" value="AT3G49690.1"/>
    <property type="gene ID" value="AT3G49690"/>
</dbReference>
<dbReference type="KEGG" id="ath:AT3G49690"/>
<dbReference type="Araport" id="AT3G49690"/>
<dbReference type="TAIR" id="AT3G49690">
    <property type="gene designation" value="MYB84"/>
</dbReference>
<dbReference type="eggNOG" id="KOG0048">
    <property type="taxonomic scope" value="Eukaryota"/>
</dbReference>
<dbReference type="HOGENOM" id="CLU_028567_6_2_1"/>
<dbReference type="InParanoid" id="Q9M2Y9"/>
<dbReference type="OMA" id="QEMMVMM"/>
<dbReference type="OrthoDB" id="2143914at2759"/>
<dbReference type="PhylomeDB" id="Q9M2Y9"/>
<dbReference type="PRO" id="PR:Q9M2Y9"/>
<dbReference type="Proteomes" id="UP000006548">
    <property type="component" value="Chromosome 3"/>
</dbReference>
<dbReference type="ExpressionAtlas" id="Q9M2Y9">
    <property type="expression patterns" value="baseline and differential"/>
</dbReference>
<dbReference type="GO" id="GO:0005634">
    <property type="term" value="C:nucleus"/>
    <property type="evidence" value="ECO:0007669"/>
    <property type="project" value="UniProtKB-SubCell"/>
</dbReference>
<dbReference type="GO" id="GO:0003677">
    <property type="term" value="F:DNA binding"/>
    <property type="evidence" value="ECO:0007669"/>
    <property type="project" value="UniProtKB-KW"/>
</dbReference>
<dbReference type="GO" id="GO:0003700">
    <property type="term" value="F:DNA-binding transcription factor activity"/>
    <property type="evidence" value="ECO:0000250"/>
    <property type="project" value="TAIR"/>
</dbReference>
<dbReference type="CDD" id="cd00167">
    <property type="entry name" value="SANT"/>
    <property type="match status" value="2"/>
</dbReference>
<dbReference type="FunFam" id="1.10.10.60:FF:000015">
    <property type="entry name" value="Transcription factor RAX3"/>
    <property type="match status" value="1"/>
</dbReference>
<dbReference type="FunFam" id="1.10.10.60:FF:000283">
    <property type="entry name" value="Transcription factor RAX3"/>
    <property type="match status" value="1"/>
</dbReference>
<dbReference type="Gene3D" id="1.10.10.60">
    <property type="entry name" value="Homeodomain-like"/>
    <property type="match status" value="2"/>
</dbReference>
<dbReference type="InterPro" id="IPR009057">
    <property type="entry name" value="Homeodomain-like_sf"/>
</dbReference>
<dbReference type="InterPro" id="IPR017930">
    <property type="entry name" value="Myb_dom"/>
</dbReference>
<dbReference type="InterPro" id="IPR001005">
    <property type="entry name" value="SANT/Myb"/>
</dbReference>
<dbReference type="PANTHER" id="PTHR48000">
    <property type="entry name" value="OS09G0431300 PROTEIN"/>
    <property type="match status" value="1"/>
</dbReference>
<dbReference type="PANTHER" id="PTHR48000:SF63">
    <property type="entry name" value="TRANSCRIPTION FACTOR RAX3"/>
    <property type="match status" value="1"/>
</dbReference>
<dbReference type="Pfam" id="PF00249">
    <property type="entry name" value="Myb_DNA-binding"/>
    <property type="match status" value="2"/>
</dbReference>
<dbReference type="SMART" id="SM00717">
    <property type="entry name" value="SANT"/>
    <property type="match status" value="2"/>
</dbReference>
<dbReference type="SUPFAM" id="SSF46689">
    <property type="entry name" value="Homeodomain-like"/>
    <property type="match status" value="1"/>
</dbReference>
<dbReference type="PROSITE" id="PS51294">
    <property type="entry name" value="HTH_MYB"/>
    <property type="match status" value="2"/>
</dbReference>
<name>RAX3_ARATH</name>
<comment type="function">
    <text evidence="1 3">Transcription activator (By similarity). Positively regulates axillary meristems (AMs) formation and development, especially during inflorescence.</text>
</comment>
<comment type="subcellular location">
    <subcellularLocation>
        <location evidence="2">Nucleus</location>
    </subcellularLocation>
</comment>
<comment type="tissue specificity">
    <text evidence="3">Ubiquitous.</text>
</comment>
<comment type="developmental stage">
    <text evidence="3">Accumulates in an adaxial ball-shaped set of cells in three to five cell layers around the L3 layer of the shoot apical meristem (SAM) in youg plantlets. In the inflorescence meristem, confined to the axils of flower primordia.</text>
</comment>
<evidence type="ECO:0000250" key="1"/>
<evidence type="ECO:0000255" key="2">
    <source>
        <dbReference type="PROSITE-ProRule" id="PRU00625"/>
    </source>
</evidence>
<evidence type="ECO:0000269" key="3">
    <source>
    </source>
</evidence>
<evidence type="ECO:0000269" key="4">
    <source>
    </source>
</evidence>